<organism>
    <name type="scientific">Bacillus subtilis (strain 168)</name>
    <dbReference type="NCBI Taxonomy" id="224308"/>
    <lineage>
        <taxon>Bacteria</taxon>
        <taxon>Bacillati</taxon>
        <taxon>Bacillota</taxon>
        <taxon>Bacilli</taxon>
        <taxon>Bacillales</taxon>
        <taxon>Bacillaceae</taxon>
        <taxon>Bacillus</taxon>
    </lineage>
</organism>
<comment type="function">
    <text evidence="2 3">Sigma factors are initiation factors that promote the attachment of RNA polymerase to specific initiation sites and are then released. Together with its coactivator RsoA, positively regulates the expression of at least three operons, including oxdC-yvrL, sigO-rsoA and yvrJ. Required for the acid stress-dependent induction of the oxalate decarboxylase oxdC.</text>
</comment>
<comment type="subunit">
    <text evidence="2">Interacts with RNA polymerase.</text>
</comment>
<comment type="interaction">
    <interactant intactId="EBI-15816883">
        <id>O34843</id>
    </interactant>
    <interactant intactId="EBI-15816929">
        <id>C0H3R4</id>
        <label>rsoA</label>
    </interactant>
    <organismsDiffer>false</organismsDiffer>
    <experiments>2</experiments>
</comment>
<comment type="induction">
    <text evidence="2 3">In the mid-exponential phase of growth under acidic conditions. Positively autoregulated, in the presence of RsoA. Down-regulated by YvrL under nonstress conditions.</text>
</comment>
<comment type="similarity">
    <text evidence="4">Belongs to the sigma-70 factor family.</text>
</comment>
<comment type="sequence caution" evidence="4">
    <conflict type="erroneous initiation">
        <sequence resource="EMBL-CDS" id="CAA11728"/>
    </conflict>
</comment>
<proteinExistence type="evidence at protein level"/>
<dbReference type="EMBL" id="AJ223978">
    <property type="protein sequence ID" value="CAA11728.1"/>
    <property type="status" value="ALT_INIT"/>
    <property type="molecule type" value="Genomic_DNA"/>
</dbReference>
<dbReference type="EMBL" id="AL009126">
    <property type="protein sequence ID" value="CAB15313.2"/>
    <property type="molecule type" value="Genomic_DNA"/>
</dbReference>
<dbReference type="RefSeq" id="NP_391203.2">
    <property type="nucleotide sequence ID" value="NC_000964.3"/>
</dbReference>
<dbReference type="RefSeq" id="WP_003243707.1">
    <property type="nucleotide sequence ID" value="NZ_OZ025638.1"/>
</dbReference>
<dbReference type="SMR" id="O34843"/>
<dbReference type="DIP" id="DIP-49019N"/>
<dbReference type="FunCoup" id="O34843">
    <property type="interactions" value="98"/>
</dbReference>
<dbReference type="IntAct" id="O34843">
    <property type="interactions" value="3"/>
</dbReference>
<dbReference type="STRING" id="224308.BSU33230"/>
<dbReference type="PaxDb" id="224308-BSU33230"/>
<dbReference type="EnsemblBacteria" id="CAB15313">
    <property type="protein sequence ID" value="CAB15313"/>
    <property type="gene ID" value="BSU_33230"/>
</dbReference>
<dbReference type="GeneID" id="935983"/>
<dbReference type="KEGG" id="bsu:BSU33230"/>
<dbReference type="PATRIC" id="fig|224308.43.peg.3483"/>
<dbReference type="eggNOG" id="COG1191">
    <property type="taxonomic scope" value="Bacteria"/>
</dbReference>
<dbReference type="InParanoid" id="O34843"/>
<dbReference type="OrthoDB" id="2450987at2"/>
<dbReference type="BioCyc" id="BSUB:BSU33230-MONOMER"/>
<dbReference type="Proteomes" id="UP000001570">
    <property type="component" value="Chromosome"/>
</dbReference>
<dbReference type="GO" id="GO:0003677">
    <property type="term" value="F:DNA binding"/>
    <property type="evidence" value="ECO:0007669"/>
    <property type="project" value="UniProtKB-KW"/>
</dbReference>
<dbReference type="GO" id="GO:0016987">
    <property type="term" value="F:sigma factor activity"/>
    <property type="evidence" value="ECO:0000318"/>
    <property type="project" value="GO_Central"/>
</dbReference>
<dbReference type="GO" id="GO:0006352">
    <property type="term" value="P:DNA-templated transcription initiation"/>
    <property type="evidence" value="ECO:0007669"/>
    <property type="project" value="InterPro"/>
</dbReference>
<dbReference type="GO" id="GO:0006355">
    <property type="term" value="P:regulation of DNA-templated transcription"/>
    <property type="evidence" value="ECO:0000318"/>
    <property type="project" value="GO_Central"/>
</dbReference>
<dbReference type="CDD" id="cd06171">
    <property type="entry name" value="Sigma70_r4"/>
    <property type="match status" value="1"/>
</dbReference>
<dbReference type="Gene3D" id="1.20.140.160">
    <property type="match status" value="1"/>
</dbReference>
<dbReference type="InterPro" id="IPR014284">
    <property type="entry name" value="RNA_pol_sigma-70_dom"/>
</dbReference>
<dbReference type="InterPro" id="IPR007630">
    <property type="entry name" value="RNA_pol_sigma70_r4"/>
</dbReference>
<dbReference type="InterPro" id="IPR013324">
    <property type="entry name" value="RNA_pol_sigma_r3/r4-like"/>
</dbReference>
<dbReference type="NCBIfam" id="TIGR02937">
    <property type="entry name" value="sigma70-ECF"/>
    <property type="match status" value="1"/>
</dbReference>
<dbReference type="PANTHER" id="PTHR30385:SF7">
    <property type="entry name" value="RNA POLYMERASE SIGMA FACTOR FLIA"/>
    <property type="match status" value="1"/>
</dbReference>
<dbReference type="PANTHER" id="PTHR30385">
    <property type="entry name" value="SIGMA FACTOR F FLAGELLAR"/>
    <property type="match status" value="1"/>
</dbReference>
<dbReference type="Pfam" id="PF04545">
    <property type="entry name" value="Sigma70_r4"/>
    <property type="match status" value="1"/>
</dbReference>
<dbReference type="SUPFAM" id="SSF88659">
    <property type="entry name" value="Sigma3 and sigma4 domains of RNA polymerase sigma factors"/>
    <property type="match status" value="1"/>
</dbReference>
<keyword id="KW-0238">DNA-binding</keyword>
<keyword id="KW-1185">Reference proteome</keyword>
<keyword id="KW-0731">Sigma factor</keyword>
<keyword id="KW-0804">Transcription</keyword>
<keyword id="KW-0805">Transcription regulation</keyword>
<gene>
    <name type="primary">sigO</name>
    <name type="synonym">yvrI</name>
    <name type="ordered locus">BSU33230</name>
</gene>
<protein>
    <recommendedName>
        <fullName>RNA polymerase sigma factor SigO</fullName>
    </recommendedName>
</protein>
<evidence type="ECO:0000250" key="1"/>
<evidence type="ECO:0000269" key="2">
    <source>
    </source>
</evidence>
<evidence type="ECO:0000269" key="3">
    <source>
    </source>
</evidence>
<evidence type="ECO:0000305" key="4"/>
<accession>O34843</accession>
<accession>Q7B2K5</accession>
<feature type="chain" id="PRO_0000377726" description="RNA polymerase sigma factor SigO">
    <location>
        <begin position="1"/>
        <end position="176"/>
    </location>
</feature>
<feature type="DNA-binding region" description="H-T-H motif" evidence="1">
    <location>
        <begin position="139"/>
        <end position="158"/>
    </location>
</feature>
<feature type="short sequence motif" description="Polymerase core binding">
    <location>
        <begin position="30"/>
        <end position="43"/>
    </location>
</feature>
<feature type="sequence conflict" description="In Ref. 1; CAA11728." evidence="4" ref="1">
    <original>G</original>
    <variation>R</variation>
    <location>
        <position position="174"/>
    </location>
</feature>
<name>SIGO_BACSU</name>
<sequence length="176" mass="20757">MKHPIVKHFLSNPQHYRLFKNVMESPNEKDARSLDELFKQFYKEIRIVKYMNSMIRIFSIDFDKRVRKNQKRYPLTVDHPEAGDRLSSETGSDAFEEFLDRQDDLSQHVQDYQLYQAIQKLTDKQKSVLTKVYLHGATMQEIADSLGESRQNISNIHKKGLENIRKQLAAQKKGEK</sequence>
<reference key="1">
    <citation type="journal article" date="1998" name="Microbiology">
        <title>The yvsA-yvqA (293 degrees - 289 degrees) region of the Bacillus subtilis chromosome containing genes involved in metal ion uptake and a putative sigma factor.</title>
        <authorList>
            <person name="Wipat A."/>
            <person name="Brignell C.S."/>
            <person name="Guy J.B."/>
            <person name="Rose M."/>
            <person name="Emmerson P.T."/>
            <person name="Harwood C.R."/>
        </authorList>
    </citation>
    <scope>NUCLEOTIDE SEQUENCE [GENOMIC DNA]</scope>
    <source>
        <strain>168</strain>
    </source>
</reference>
<reference key="2">
    <citation type="journal article" date="1997" name="Nature">
        <title>The complete genome sequence of the Gram-positive bacterium Bacillus subtilis.</title>
        <authorList>
            <person name="Kunst F."/>
            <person name="Ogasawara N."/>
            <person name="Moszer I."/>
            <person name="Albertini A.M."/>
            <person name="Alloni G."/>
            <person name="Azevedo V."/>
            <person name="Bertero M.G."/>
            <person name="Bessieres P."/>
            <person name="Bolotin A."/>
            <person name="Borchert S."/>
            <person name="Borriss R."/>
            <person name="Boursier L."/>
            <person name="Brans A."/>
            <person name="Braun M."/>
            <person name="Brignell S.C."/>
            <person name="Bron S."/>
            <person name="Brouillet S."/>
            <person name="Bruschi C.V."/>
            <person name="Caldwell B."/>
            <person name="Capuano V."/>
            <person name="Carter N.M."/>
            <person name="Choi S.-K."/>
            <person name="Codani J.-J."/>
            <person name="Connerton I.F."/>
            <person name="Cummings N.J."/>
            <person name="Daniel R.A."/>
            <person name="Denizot F."/>
            <person name="Devine K.M."/>
            <person name="Duesterhoeft A."/>
            <person name="Ehrlich S.D."/>
            <person name="Emmerson P.T."/>
            <person name="Entian K.-D."/>
            <person name="Errington J."/>
            <person name="Fabret C."/>
            <person name="Ferrari E."/>
            <person name="Foulger D."/>
            <person name="Fritz C."/>
            <person name="Fujita M."/>
            <person name="Fujita Y."/>
            <person name="Fuma S."/>
            <person name="Galizzi A."/>
            <person name="Galleron N."/>
            <person name="Ghim S.-Y."/>
            <person name="Glaser P."/>
            <person name="Goffeau A."/>
            <person name="Golightly E.J."/>
            <person name="Grandi G."/>
            <person name="Guiseppi G."/>
            <person name="Guy B.J."/>
            <person name="Haga K."/>
            <person name="Haiech J."/>
            <person name="Harwood C.R."/>
            <person name="Henaut A."/>
            <person name="Hilbert H."/>
            <person name="Holsappel S."/>
            <person name="Hosono S."/>
            <person name="Hullo M.-F."/>
            <person name="Itaya M."/>
            <person name="Jones L.-M."/>
            <person name="Joris B."/>
            <person name="Karamata D."/>
            <person name="Kasahara Y."/>
            <person name="Klaerr-Blanchard M."/>
            <person name="Klein C."/>
            <person name="Kobayashi Y."/>
            <person name="Koetter P."/>
            <person name="Koningstein G."/>
            <person name="Krogh S."/>
            <person name="Kumano M."/>
            <person name="Kurita K."/>
            <person name="Lapidus A."/>
            <person name="Lardinois S."/>
            <person name="Lauber J."/>
            <person name="Lazarevic V."/>
            <person name="Lee S.-M."/>
            <person name="Levine A."/>
            <person name="Liu H."/>
            <person name="Masuda S."/>
            <person name="Mauel C."/>
            <person name="Medigue C."/>
            <person name="Medina N."/>
            <person name="Mellado R.P."/>
            <person name="Mizuno M."/>
            <person name="Moestl D."/>
            <person name="Nakai S."/>
            <person name="Noback M."/>
            <person name="Noone D."/>
            <person name="O'Reilly M."/>
            <person name="Ogawa K."/>
            <person name="Ogiwara A."/>
            <person name="Oudega B."/>
            <person name="Park S.-H."/>
            <person name="Parro V."/>
            <person name="Pohl T.M."/>
            <person name="Portetelle D."/>
            <person name="Porwollik S."/>
            <person name="Prescott A.M."/>
            <person name="Presecan E."/>
            <person name="Pujic P."/>
            <person name="Purnelle B."/>
            <person name="Rapoport G."/>
            <person name="Rey M."/>
            <person name="Reynolds S."/>
            <person name="Rieger M."/>
            <person name="Rivolta C."/>
            <person name="Rocha E."/>
            <person name="Roche B."/>
            <person name="Rose M."/>
            <person name="Sadaie Y."/>
            <person name="Sato T."/>
            <person name="Scanlan E."/>
            <person name="Schleich S."/>
            <person name="Schroeter R."/>
            <person name="Scoffone F."/>
            <person name="Sekiguchi J."/>
            <person name="Sekowska A."/>
            <person name="Seror S.J."/>
            <person name="Serror P."/>
            <person name="Shin B.-S."/>
            <person name="Soldo B."/>
            <person name="Sorokin A."/>
            <person name="Tacconi E."/>
            <person name="Takagi T."/>
            <person name="Takahashi H."/>
            <person name="Takemaru K."/>
            <person name="Takeuchi M."/>
            <person name="Tamakoshi A."/>
            <person name="Tanaka T."/>
            <person name="Terpstra P."/>
            <person name="Tognoni A."/>
            <person name="Tosato V."/>
            <person name="Uchiyama S."/>
            <person name="Vandenbol M."/>
            <person name="Vannier F."/>
            <person name="Vassarotti A."/>
            <person name="Viari A."/>
            <person name="Wambutt R."/>
            <person name="Wedler E."/>
            <person name="Wedler H."/>
            <person name="Weitzenegger T."/>
            <person name="Winters P."/>
            <person name="Wipat A."/>
            <person name="Yamamoto H."/>
            <person name="Yamane K."/>
            <person name="Yasumoto K."/>
            <person name="Yata K."/>
            <person name="Yoshida K."/>
            <person name="Yoshikawa H.-F."/>
            <person name="Zumstein E."/>
            <person name="Yoshikawa H."/>
            <person name="Danchin A."/>
        </authorList>
    </citation>
    <scope>NUCLEOTIDE SEQUENCE [LARGE SCALE GENOMIC DNA]</scope>
    <source>
        <strain>168</strain>
    </source>
</reference>
<reference key="3">
    <citation type="journal article" date="2009" name="Microbiology">
        <title>From a consortium sequence to a unified sequence: the Bacillus subtilis 168 reference genome a decade later.</title>
        <authorList>
            <person name="Barbe V."/>
            <person name="Cruveiller S."/>
            <person name="Kunst F."/>
            <person name="Lenoble P."/>
            <person name="Meurice G."/>
            <person name="Sekowska A."/>
            <person name="Vallenet D."/>
            <person name="Wang T."/>
            <person name="Moszer I."/>
            <person name="Medigue C."/>
            <person name="Danchin A."/>
        </authorList>
    </citation>
    <scope>SEQUENCE REVISION TO 174</scope>
</reference>
<reference key="4">
    <citation type="journal article" date="2008" name="Mol. Microbiol.">
        <title>A previously unidentified sigma factor and two accessory proteins regulate oxalate decarboxylase expression in Bacillus subtilis.</title>
        <authorList>
            <person name="MacLellan S.R."/>
            <person name="Wecke T."/>
            <person name="Helmann J.D."/>
        </authorList>
    </citation>
    <scope>FUNCTION AS A SIGMA FACTOR</scope>
    <scope>INTERACTION WITH RNA POLYMERASE</scope>
    <scope>INDUCTION</scope>
    <source>
        <strain>168 / CU1065</strain>
    </source>
</reference>
<reference key="5">
    <citation type="journal article" date="2009" name="J. Bacteriol.">
        <title>The yvrI alternative sigma factor is essential for acid stress induction of oxalate decarboxylase in Bacillus subtilis.</title>
        <authorList>
            <person name="MacLellan S.R."/>
            <person name="Helmann J.D."/>
            <person name="Antelmann H."/>
        </authorList>
    </citation>
    <scope>FUNCTION IN OXDC INDUCTION</scope>
    <scope>INDUCTION</scope>
    <source>
        <strain>168 / CU1065</strain>
    </source>
</reference>